<gene>
    <name evidence="1" type="primary">pcrB</name>
    <name type="ordered locus">NWMN_1844</name>
</gene>
<keyword id="KW-0444">Lipid biosynthesis</keyword>
<keyword id="KW-0443">Lipid metabolism</keyword>
<keyword id="KW-0460">Magnesium</keyword>
<keyword id="KW-0479">Metal-binding</keyword>
<keyword id="KW-0594">Phospholipid biosynthesis</keyword>
<keyword id="KW-1208">Phospholipid metabolism</keyword>
<keyword id="KW-0808">Transferase</keyword>
<dbReference type="EC" id="2.5.1.n9" evidence="1"/>
<dbReference type="EMBL" id="AP009351">
    <property type="protein sequence ID" value="BAF68116.1"/>
    <property type="molecule type" value="Genomic_DNA"/>
</dbReference>
<dbReference type="RefSeq" id="WP_000272070.1">
    <property type="nucleotide sequence ID" value="NZ_JBBIAE010000010.1"/>
</dbReference>
<dbReference type="SMR" id="A6QID4"/>
<dbReference type="KEGG" id="sae:NWMN_1844"/>
<dbReference type="HOGENOM" id="CLU_095211_0_0_9"/>
<dbReference type="UniPathway" id="UPA00940"/>
<dbReference type="Proteomes" id="UP000006386">
    <property type="component" value="Chromosome"/>
</dbReference>
<dbReference type="GO" id="GO:0120536">
    <property type="term" value="F:heptaprenylglyceryl phosphate synthase activity"/>
    <property type="evidence" value="ECO:0007669"/>
    <property type="project" value="RHEA"/>
</dbReference>
<dbReference type="GO" id="GO:0000287">
    <property type="term" value="F:magnesium ion binding"/>
    <property type="evidence" value="ECO:0007669"/>
    <property type="project" value="UniProtKB-UniRule"/>
</dbReference>
<dbReference type="GO" id="GO:0046474">
    <property type="term" value="P:glycerophospholipid biosynthetic process"/>
    <property type="evidence" value="ECO:0007669"/>
    <property type="project" value="UniProtKB-UniRule"/>
</dbReference>
<dbReference type="CDD" id="cd02812">
    <property type="entry name" value="PcrB_like"/>
    <property type="match status" value="1"/>
</dbReference>
<dbReference type="FunFam" id="3.20.20.390:FF:000001">
    <property type="entry name" value="Heptaprenylglyceryl phosphate synthase"/>
    <property type="match status" value="1"/>
</dbReference>
<dbReference type="Gene3D" id="3.20.20.390">
    <property type="entry name" value="FMN-linked oxidoreductases"/>
    <property type="match status" value="1"/>
</dbReference>
<dbReference type="HAMAP" id="MF_00112">
    <property type="entry name" value="GGGP_HepGP_synthase"/>
    <property type="match status" value="1"/>
</dbReference>
<dbReference type="InterPro" id="IPR039074">
    <property type="entry name" value="GGGP/HepGP_synthase_I"/>
</dbReference>
<dbReference type="InterPro" id="IPR038597">
    <property type="entry name" value="GGGP/HepGP_synthase_sf"/>
</dbReference>
<dbReference type="InterPro" id="IPR008205">
    <property type="entry name" value="GGGP_HepGP_synthase"/>
</dbReference>
<dbReference type="NCBIfam" id="TIGR01768">
    <property type="entry name" value="GGGP-family"/>
    <property type="match status" value="1"/>
</dbReference>
<dbReference type="NCBIfam" id="NF003197">
    <property type="entry name" value="PRK04169.1-1"/>
    <property type="match status" value="1"/>
</dbReference>
<dbReference type="NCBIfam" id="NF003199">
    <property type="entry name" value="PRK04169.1-3"/>
    <property type="match status" value="1"/>
</dbReference>
<dbReference type="NCBIfam" id="NF003200">
    <property type="entry name" value="PRK04169.1-4"/>
    <property type="match status" value="1"/>
</dbReference>
<dbReference type="PANTHER" id="PTHR40029">
    <property type="match status" value="1"/>
</dbReference>
<dbReference type="PANTHER" id="PTHR40029:SF2">
    <property type="entry name" value="HEPTAPRENYLGLYCERYL PHOSPHATE SYNTHASE"/>
    <property type="match status" value="1"/>
</dbReference>
<dbReference type="Pfam" id="PF01884">
    <property type="entry name" value="PcrB"/>
    <property type="match status" value="1"/>
</dbReference>
<dbReference type="SUPFAM" id="SSF51395">
    <property type="entry name" value="FMN-linked oxidoreductases"/>
    <property type="match status" value="1"/>
</dbReference>
<proteinExistence type="inferred from homology"/>
<name>PCRB_STAAE</name>
<accession>A6QID4</accession>
<organism>
    <name type="scientific">Staphylococcus aureus (strain Newman)</name>
    <dbReference type="NCBI Taxonomy" id="426430"/>
    <lineage>
        <taxon>Bacteria</taxon>
        <taxon>Bacillati</taxon>
        <taxon>Bacillota</taxon>
        <taxon>Bacilli</taxon>
        <taxon>Bacillales</taxon>
        <taxon>Staphylococcaceae</taxon>
        <taxon>Staphylococcus</taxon>
    </lineage>
</organism>
<comment type="function">
    <text evidence="1">Prenyltransferase that catalyzes in vivo the transfer of the heptaprenyl moiety of heptaprenyl pyrophosphate (HepPP; 35 carbon atoms) to the C3 hydroxyl of sn-glycerol-1-phosphate (G1P), producing heptaprenylglyceryl phosphate (HepGP). This reaction is an ether-bond-formation step in the biosynthesis of archaea-type G1P-based membrane lipids found in Bacillales.</text>
</comment>
<comment type="catalytic activity">
    <reaction evidence="1">
        <text>sn-glycerol 1-phosphate + all-trans-heptaprenyl diphosphate = 3-heptaprenyl-sn-glycero-1-phosphate + diphosphate</text>
        <dbReference type="Rhea" id="RHEA:33495"/>
        <dbReference type="ChEBI" id="CHEBI:33019"/>
        <dbReference type="ChEBI" id="CHEBI:57685"/>
        <dbReference type="ChEBI" id="CHEBI:58206"/>
        <dbReference type="ChEBI" id="CHEBI:64781"/>
        <dbReference type="EC" id="2.5.1.n9"/>
    </reaction>
</comment>
<comment type="cofactor">
    <cofactor evidence="1">
        <name>Mg(2+)</name>
        <dbReference type="ChEBI" id="CHEBI:18420"/>
    </cofactor>
</comment>
<comment type="pathway">
    <text evidence="1">Membrane lipid metabolism; glycerophospholipid metabolism.</text>
</comment>
<comment type="subunit">
    <text evidence="1">Homodimer.</text>
</comment>
<comment type="similarity">
    <text evidence="1">Belongs to the GGGP/HepGP synthase family. Group I subfamily.</text>
</comment>
<protein>
    <recommendedName>
        <fullName evidence="1">Heptaprenylglyceryl phosphate synthase</fullName>
        <shortName evidence="1">HepGP synthase</shortName>
        <ecNumber evidence="1">2.5.1.n9</ecNumber>
    </recommendedName>
    <alternativeName>
        <fullName evidence="1">Glycerol-1-phosphate heptaprenyltransferase</fullName>
    </alternativeName>
</protein>
<feature type="chain" id="PRO_1000071334" description="Heptaprenylglyceryl phosphate synthase">
    <location>
        <begin position="1"/>
        <end position="230"/>
    </location>
</feature>
<feature type="binding site" evidence="1">
    <location>
        <position position="12"/>
    </location>
    <ligand>
        <name>sn-glycerol 1-phosphate</name>
        <dbReference type="ChEBI" id="CHEBI:57685"/>
    </ligand>
</feature>
<feature type="binding site" evidence="1">
    <location>
        <position position="14"/>
    </location>
    <ligand>
        <name>Mg(2+)</name>
        <dbReference type="ChEBI" id="CHEBI:18420"/>
    </ligand>
</feature>
<feature type="binding site" evidence="1">
    <location>
        <position position="40"/>
    </location>
    <ligand>
        <name>Mg(2+)</name>
        <dbReference type="ChEBI" id="CHEBI:18420"/>
    </ligand>
</feature>
<feature type="binding site" evidence="1">
    <location>
        <begin position="159"/>
        <end position="164"/>
    </location>
    <ligand>
        <name>sn-glycerol 1-phosphate</name>
        <dbReference type="ChEBI" id="CHEBI:57685"/>
    </ligand>
</feature>
<feature type="binding site" evidence="1">
    <location>
        <position position="189"/>
    </location>
    <ligand>
        <name>sn-glycerol 1-phosphate</name>
        <dbReference type="ChEBI" id="CHEBI:57685"/>
    </ligand>
</feature>
<feature type="binding site" evidence="1">
    <location>
        <begin position="209"/>
        <end position="210"/>
    </location>
    <ligand>
        <name>sn-glycerol 1-phosphate</name>
        <dbReference type="ChEBI" id="CHEBI:57685"/>
    </ligand>
</feature>
<reference key="1">
    <citation type="journal article" date="2008" name="J. Bacteriol.">
        <title>Genome sequence of Staphylococcus aureus strain Newman and comparative analysis of staphylococcal genomes: polymorphism and evolution of two major pathogenicity islands.</title>
        <authorList>
            <person name="Baba T."/>
            <person name="Bae T."/>
            <person name="Schneewind O."/>
            <person name="Takeuchi F."/>
            <person name="Hiramatsu K."/>
        </authorList>
    </citation>
    <scope>NUCLEOTIDE SEQUENCE [LARGE SCALE GENOMIC DNA]</scope>
    <source>
        <strain>Newman</strain>
    </source>
</reference>
<sequence length="230" mass="25889">MYDIKKWRHIFKLDPAKHISDDDLDAICMSQTDAIMIGGTDDVTEDNVIHLMSRVRRYPLPLVLEISNIESVMPGFDFYFVPTVLNSTDVVFHNGTLLEALKTYGHSIDFEEVIFEGYVVCNADSKVAKHTKANTDLTTEDLEAYAQMVNHMYRLPVMYIEYSGIYGDVSKVQAVSEHLTETQLFYGGGISSEQQATEMAAIADTIIVGDIIYKDIKKALKTVKIKESSK</sequence>
<evidence type="ECO:0000255" key="1">
    <source>
        <dbReference type="HAMAP-Rule" id="MF_00112"/>
    </source>
</evidence>